<evidence type="ECO:0000250" key="1"/>
<evidence type="ECO:0000269" key="2">
    <source>
    </source>
</evidence>
<evidence type="ECO:0000305" key="3"/>
<feature type="chain" id="PRO_0000317078" description="Vacuolar protein sorting-associated protein 52">
    <location>
        <begin position="1"/>
        <end position="508"/>
    </location>
</feature>
<organism>
    <name type="scientific">Schizosaccharomyces pombe (strain 972 / ATCC 24843)</name>
    <name type="common">Fission yeast</name>
    <dbReference type="NCBI Taxonomy" id="284812"/>
    <lineage>
        <taxon>Eukaryota</taxon>
        <taxon>Fungi</taxon>
        <taxon>Dikarya</taxon>
        <taxon>Ascomycota</taxon>
        <taxon>Taphrinomycotina</taxon>
        <taxon>Schizosaccharomycetes</taxon>
        <taxon>Schizosaccharomycetales</taxon>
        <taxon>Schizosaccharomycetaceae</taxon>
        <taxon>Schizosaccharomyces</taxon>
    </lineage>
</organism>
<reference key="1">
    <citation type="journal article" date="2002" name="Nature">
        <title>The genome sequence of Schizosaccharomyces pombe.</title>
        <authorList>
            <person name="Wood V."/>
            <person name="Gwilliam R."/>
            <person name="Rajandream M.A."/>
            <person name="Lyne M.H."/>
            <person name="Lyne R."/>
            <person name="Stewart A."/>
            <person name="Sgouros J.G."/>
            <person name="Peat N."/>
            <person name="Hayles J."/>
            <person name="Baker S.G."/>
            <person name="Basham D."/>
            <person name="Bowman S."/>
            <person name="Brooks K."/>
            <person name="Brown D."/>
            <person name="Brown S."/>
            <person name="Chillingworth T."/>
            <person name="Churcher C.M."/>
            <person name="Collins M."/>
            <person name="Connor R."/>
            <person name="Cronin A."/>
            <person name="Davis P."/>
            <person name="Feltwell T."/>
            <person name="Fraser A."/>
            <person name="Gentles S."/>
            <person name="Goble A."/>
            <person name="Hamlin N."/>
            <person name="Harris D.E."/>
            <person name="Hidalgo J."/>
            <person name="Hodgson G."/>
            <person name="Holroyd S."/>
            <person name="Hornsby T."/>
            <person name="Howarth S."/>
            <person name="Huckle E.J."/>
            <person name="Hunt S."/>
            <person name="Jagels K."/>
            <person name="James K.D."/>
            <person name="Jones L."/>
            <person name="Jones M."/>
            <person name="Leather S."/>
            <person name="McDonald S."/>
            <person name="McLean J."/>
            <person name="Mooney P."/>
            <person name="Moule S."/>
            <person name="Mungall K.L."/>
            <person name="Murphy L.D."/>
            <person name="Niblett D."/>
            <person name="Odell C."/>
            <person name="Oliver K."/>
            <person name="O'Neil S."/>
            <person name="Pearson D."/>
            <person name="Quail M.A."/>
            <person name="Rabbinowitsch E."/>
            <person name="Rutherford K.M."/>
            <person name="Rutter S."/>
            <person name="Saunders D."/>
            <person name="Seeger K."/>
            <person name="Sharp S."/>
            <person name="Skelton J."/>
            <person name="Simmonds M.N."/>
            <person name="Squares R."/>
            <person name="Squares S."/>
            <person name="Stevens K."/>
            <person name="Taylor K."/>
            <person name="Taylor R.G."/>
            <person name="Tivey A."/>
            <person name="Walsh S.V."/>
            <person name="Warren T."/>
            <person name="Whitehead S."/>
            <person name="Woodward J.R."/>
            <person name="Volckaert G."/>
            <person name="Aert R."/>
            <person name="Robben J."/>
            <person name="Grymonprez B."/>
            <person name="Weltjens I."/>
            <person name="Vanstreels E."/>
            <person name="Rieger M."/>
            <person name="Schaefer M."/>
            <person name="Mueller-Auer S."/>
            <person name="Gabel C."/>
            <person name="Fuchs M."/>
            <person name="Duesterhoeft A."/>
            <person name="Fritzc C."/>
            <person name="Holzer E."/>
            <person name="Moestl D."/>
            <person name="Hilbert H."/>
            <person name="Borzym K."/>
            <person name="Langer I."/>
            <person name="Beck A."/>
            <person name="Lehrach H."/>
            <person name="Reinhardt R."/>
            <person name="Pohl T.M."/>
            <person name="Eger P."/>
            <person name="Zimmermann W."/>
            <person name="Wedler H."/>
            <person name="Wambutt R."/>
            <person name="Purnelle B."/>
            <person name="Goffeau A."/>
            <person name="Cadieu E."/>
            <person name="Dreano S."/>
            <person name="Gloux S."/>
            <person name="Lelaure V."/>
            <person name="Mottier S."/>
            <person name="Galibert F."/>
            <person name="Aves S.J."/>
            <person name="Xiang Z."/>
            <person name="Hunt C."/>
            <person name="Moore K."/>
            <person name="Hurst S.M."/>
            <person name="Lucas M."/>
            <person name="Rochet M."/>
            <person name="Gaillardin C."/>
            <person name="Tallada V.A."/>
            <person name="Garzon A."/>
            <person name="Thode G."/>
            <person name="Daga R.R."/>
            <person name="Cruzado L."/>
            <person name="Jimenez J."/>
            <person name="Sanchez M."/>
            <person name="del Rey F."/>
            <person name="Benito J."/>
            <person name="Dominguez A."/>
            <person name="Revuelta J.L."/>
            <person name="Moreno S."/>
            <person name="Armstrong J."/>
            <person name="Forsburg S.L."/>
            <person name="Cerutti L."/>
            <person name="Lowe T."/>
            <person name="McCombie W.R."/>
            <person name="Paulsen I."/>
            <person name="Potashkin J."/>
            <person name="Shpakovski G.V."/>
            <person name="Ussery D."/>
            <person name="Barrell B.G."/>
            <person name="Nurse P."/>
        </authorList>
    </citation>
    <scope>NUCLEOTIDE SEQUENCE [LARGE SCALE GENOMIC DNA]</scope>
    <source>
        <strain>972 / ATCC 24843</strain>
    </source>
</reference>
<reference key="2">
    <citation type="journal article" date="2006" name="Nat. Biotechnol.">
        <title>ORFeome cloning and global analysis of protein localization in the fission yeast Schizosaccharomyces pombe.</title>
        <authorList>
            <person name="Matsuyama A."/>
            <person name="Arai R."/>
            <person name="Yashiroda Y."/>
            <person name="Shirai A."/>
            <person name="Kamata A."/>
            <person name="Sekido S."/>
            <person name="Kobayashi Y."/>
            <person name="Hashimoto A."/>
            <person name="Hamamoto M."/>
            <person name="Hiraoka Y."/>
            <person name="Horinouchi S."/>
            <person name="Yoshida M."/>
        </authorList>
    </citation>
    <scope>SUBCELLULAR LOCATION [LARGE SCALE ANALYSIS]</scope>
</reference>
<gene>
    <name type="primary">vps52</name>
    <name type="ORF">SPBC336.11</name>
</gene>
<protein>
    <recommendedName>
        <fullName>Vacuolar protein sorting-associated protein 52</fullName>
    </recommendedName>
</protein>
<keyword id="KW-0333">Golgi apparatus</keyword>
<keyword id="KW-0472">Membrane</keyword>
<keyword id="KW-0653">Protein transport</keyword>
<keyword id="KW-1185">Reference proteome</keyword>
<keyword id="KW-0813">Transport</keyword>
<sequence>MQRASTQDVYDGSGDDLNKLDSLKSVLNDVLSSLERFQVDLDVATSDIYKVSERSNKIQVNLNNLKAVESALGAEIDGAILPPDLIKTISTGDMDHPSWNSALEKLTSFLEGGEDDSSLGNMFNSLQINKDQKKLVDKLRDKAIERIRNYIVVTIKMFRQAFVDVFPIRKHRLIANKNYYLFLFKFNRKLALELQRAYINTMNWFYLYHFEQYSRFLDKVHVLKGETIRVEEDRKGLFNLSKGAQQSYGNQMLSVNLRPQDFDMNSVLTASTMHHIESSPQYIERVYCSWELVLTEHVSSEYAFLLEYFNLSKDQQATVFAAIFEKTLHFSRKYITGLISSSIDCIGILKSIRFTQKLALQAQTNIVPVIEPHYNSMILFLWPRFQAVMDMHCESLRKTNLSVKPEEITSRPHPLSQRVAELLYSLSMLSVNVVEAEPVARSASRLAQDYVSMLQNLCKTVNDKRRQSRFLSNNYTLISTVLSGVSGNLAIEQKTYFEKLNENLTNFQ</sequence>
<dbReference type="EMBL" id="CU329671">
    <property type="protein sequence ID" value="CAB58163.1"/>
    <property type="molecule type" value="Genomic_DNA"/>
</dbReference>
<dbReference type="PIR" id="T40249">
    <property type="entry name" value="T40249"/>
</dbReference>
<dbReference type="RefSeq" id="NP_596131.1">
    <property type="nucleotide sequence ID" value="NM_001022049.2"/>
</dbReference>
<dbReference type="SMR" id="Q9UST3"/>
<dbReference type="FunCoup" id="Q9UST3">
    <property type="interactions" value="533"/>
</dbReference>
<dbReference type="STRING" id="284812.Q9UST3"/>
<dbReference type="iPTMnet" id="Q9UST3"/>
<dbReference type="PaxDb" id="4896-SPBC336.11.1"/>
<dbReference type="EnsemblFungi" id="SPBC336.11.1">
    <property type="protein sequence ID" value="SPBC336.11.1:pep"/>
    <property type="gene ID" value="SPBC336.11"/>
</dbReference>
<dbReference type="GeneID" id="2540233"/>
<dbReference type="KEGG" id="spo:2540233"/>
<dbReference type="PomBase" id="SPBC336.11">
    <property type="gene designation" value="vps52"/>
</dbReference>
<dbReference type="VEuPathDB" id="FungiDB:SPBC336.11"/>
<dbReference type="eggNOG" id="KOG1961">
    <property type="taxonomic scope" value="Eukaryota"/>
</dbReference>
<dbReference type="HOGENOM" id="CLU_010797_1_0_1"/>
<dbReference type="InParanoid" id="Q9UST3"/>
<dbReference type="OMA" id="IHVVMVE"/>
<dbReference type="PhylomeDB" id="Q9UST3"/>
<dbReference type="PRO" id="PR:Q9UST3"/>
<dbReference type="Proteomes" id="UP000002485">
    <property type="component" value="Chromosome II"/>
</dbReference>
<dbReference type="GO" id="GO:0005829">
    <property type="term" value="C:cytosol"/>
    <property type="evidence" value="ECO:0007669"/>
    <property type="project" value="GOC"/>
</dbReference>
<dbReference type="GO" id="GO:0000938">
    <property type="term" value="C:GARP complex"/>
    <property type="evidence" value="ECO:0000318"/>
    <property type="project" value="GO_Central"/>
</dbReference>
<dbReference type="GO" id="GO:0005794">
    <property type="term" value="C:Golgi apparatus"/>
    <property type="evidence" value="ECO:0007005"/>
    <property type="project" value="PomBase"/>
</dbReference>
<dbReference type="GO" id="GO:0016020">
    <property type="term" value="C:membrane"/>
    <property type="evidence" value="ECO:0007669"/>
    <property type="project" value="UniProtKB-KW"/>
</dbReference>
<dbReference type="GO" id="GO:0019905">
    <property type="term" value="F:syntaxin binding"/>
    <property type="evidence" value="ECO:0000318"/>
    <property type="project" value="GO_Central"/>
</dbReference>
<dbReference type="GO" id="GO:0032456">
    <property type="term" value="P:endocytic recycling"/>
    <property type="evidence" value="ECO:0000318"/>
    <property type="project" value="GO_Central"/>
</dbReference>
<dbReference type="GO" id="GO:0006896">
    <property type="term" value="P:Golgi to vacuole transport"/>
    <property type="evidence" value="ECO:0000318"/>
    <property type="project" value="GO_Central"/>
</dbReference>
<dbReference type="GO" id="GO:0006886">
    <property type="term" value="P:intracellular protein transport"/>
    <property type="evidence" value="ECO:0000305"/>
    <property type="project" value="PomBase"/>
</dbReference>
<dbReference type="GO" id="GO:0042147">
    <property type="term" value="P:retrograde transport, endosome to Golgi"/>
    <property type="evidence" value="ECO:0000318"/>
    <property type="project" value="GO_Central"/>
</dbReference>
<dbReference type="InterPro" id="IPR007258">
    <property type="entry name" value="Vps52"/>
</dbReference>
<dbReference type="InterPro" id="IPR048361">
    <property type="entry name" value="Vps52_C"/>
</dbReference>
<dbReference type="InterPro" id="IPR048319">
    <property type="entry name" value="Vps52_CC"/>
</dbReference>
<dbReference type="PANTHER" id="PTHR14190">
    <property type="entry name" value="SUPPRESSOR OF ACTIN MUTATIONS 2/VACUOLAR PROTEIN SORTING 52"/>
    <property type="match status" value="1"/>
</dbReference>
<dbReference type="PANTHER" id="PTHR14190:SF7">
    <property type="entry name" value="VACUOLAR PROTEIN SORTING-ASSOCIATED PROTEIN 52 HOMOLOG"/>
    <property type="match status" value="1"/>
</dbReference>
<dbReference type="Pfam" id="PF20655">
    <property type="entry name" value="Vps52_C"/>
    <property type="match status" value="1"/>
</dbReference>
<dbReference type="Pfam" id="PF04129">
    <property type="entry name" value="Vps52_CC"/>
    <property type="match status" value="1"/>
</dbReference>
<name>VPS52_SCHPO</name>
<accession>Q9UST3</accession>
<comment type="function">
    <text evidence="1">Involved in retrograde transport from early and late endosomes to late Golgi by linking the vesicle through the t-SNARE TGL1 to the Golgi, leading to the membrane fusion between late Golgi and endosomal vesicles.</text>
</comment>
<comment type="subunit">
    <text evidence="1">Component of the Golgi-associated retrograde protein (GARP) complex.</text>
</comment>
<comment type="subcellular location">
    <subcellularLocation>
        <location evidence="2">Golgi apparatus</location>
        <location evidence="2">trans-Golgi network membrane</location>
        <topology evidence="2">Peripheral membrane protein</topology>
    </subcellularLocation>
</comment>
<comment type="similarity">
    <text evidence="3">Belongs to the VPS52 family.</text>
</comment>
<proteinExistence type="inferred from homology"/>